<feature type="chain" id="PRO_0000064775" description="Effector protein AvrPphDPsv">
    <location>
        <begin position="1"/>
        <end position="705"/>
    </location>
</feature>
<feature type="region of interest" description="Disordered" evidence="2">
    <location>
        <begin position="1"/>
        <end position="40"/>
    </location>
</feature>
<feature type="region of interest" description="Disordered" evidence="2">
    <location>
        <begin position="175"/>
        <end position="205"/>
    </location>
</feature>
<feature type="compositionally biased region" description="Polar residues" evidence="2">
    <location>
        <begin position="1"/>
        <end position="15"/>
    </location>
</feature>
<sequence>MNPLQSIQHNITTPPISGGQPLDAVGPQAQKSHPKRISPSQLSQSAHQALERLSANAEHQRLASLVRKALQDGTFQFQSSNHTQVTYKASICLPADTDTVRTDLLINNELTVKARLNDQSEYDIVSAHLHGSSKAISFDVPSPPPAHGSASSVLSERTHLVMSRVLSQDAVDSSRLETSLLSSPDHSRPPSQPKPVHLGSVRRESGSLVSDNPVVQALLSFAQADQAFPPQAASIAGVQLEMRPRRDIEKALEEFKGAFTVEKAQLMSGANSSERVDEDVNADIHIPLLLKAIERGAAAFGPNASIGQNSAKAFLASCAPKITSNDDVLSEFINQKLKGDDDLQVRLGAQELLHVATKKEFQLGGLAGSIGVSSILGSAWELGASELLKNAIFGKNFSPSQYALQLAGIDSVPPLIIESMDTMCVLAIIKGMKGEEWSMSDLLPKALKAGAISSVVSFPNNVLQYAGFKSRVGDLAANSVTTEAAIFGAASGIPPEVKESEELMRAGLFQSMKDGVMAHPGEGVDTKKTIERMTRHALDIAPGESTAVKSMGLASIVGMIPLIASNKATGLLSEQVLRIFRSAVFNPIEAIALNALALGGRVNVPGLFDSDNAKHARVVQTILARASQHMEAGDRDISAEELHQMLAPRSEFLRHVGSAIVNGMNASFEAIPALVRKLGYGEAPLAERIPYQDLAVPDTSRQPAP</sequence>
<evidence type="ECO:0000250" key="1"/>
<evidence type="ECO:0000256" key="2">
    <source>
        <dbReference type="SAM" id="MobiDB-lite"/>
    </source>
</evidence>
<proteinExistence type="inferred from homology"/>
<accession>Q8RK07</accession>
<name>AVRD1_PSESS</name>
<comment type="function">
    <text evidence="1">Effector protein involved in non-host recognition.</text>
</comment>
<comment type="subcellular location">
    <subcellularLocation>
        <location>Secreted</location>
    </subcellularLocation>
    <text evidence="1">Secreted via type III secretion system (T3SS).</text>
</comment>
<dbReference type="EMBL" id="AJ439730">
    <property type="protein sequence ID" value="CAD29304.1"/>
    <property type="molecule type" value="Genomic_DNA"/>
</dbReference>
<dbReference type="SMR" id="Q8RK07"/>
<dbReference type="GO" id="GO:0005576">
    <property type="term" value="C:extracellular region"/>
    <property type="evidence" value="ECO:0007669"/>
    <property type="project" value="UniProtKB-SubCell"/>
</dbReference>
<dbReference type="GO" id="GO:0052040">
    <property type="term" value="P:symbiont-mediated perturbation of host programmed cell death"/>
    <property type="evidence" value="ECO:0007669"/>
    <property type="project" value="UniProtKB-KW"/>
</dbReference>
<dbReference type="InterPro" id="IPR053430">
    <property type="entry name" value="Plant_immune_effector"/>
</dbReference>
<dbReference type="NCBIfam" id="NF041309">
    <property type="entry name" value="XopB"/>
    <property type="match status" value="1"/>
</dbReference>
<organism>
    <name type="scientific">Pseudomonas savastanoi</name>
    <name type="common">Pseudomonas syringae pv. savastanoi</name>
    <dbReference type="NCBI Taxonomy" id="29438"/>
    <lineage>
        <taxon>Bacteria</taxon>
        <taxon>Pseudomonadati</taxon>
        <taxon>Pseudomonadota</taxon>
        <taxon>Gammaproteobacteria</taxon>
        <taxon>Pseudomonadales</taxon>
        <taxon>Pseudomonadaceae</taxon>
        <taxon>Pseudomonas</taxon>
    </lineage>
</organism>
<reference key="1">
    <citation type="journal article" date="2002" name="Mol. Plant Pathol.">
        <title>Location and activity of members of a family of virPphA homologues in pathovars of Pseudomonas syringae and P.savastanoi.</title>
        <authorList>
            <person name="Jackson R.W."/>
            <person name="Mansfield J.W."/>
            <person name="Ammouneh H."/>
            <person name="Dutton L.C."/>
            <person name="Wharton B."/>
            <person name="Ortiz-Barredo A."/>
            <person name="Arnold D.L."/>
            <person name="Tsiamis G."/>
            <person name="Sesma A."/>
            <person name="Butcher D."/>
            <person name="Boch J."/>
            <person name="Kim Y.J."/>
            <person name="Martin G.B."/>
            <person name="Tegli S."/>
            <person name="Murillo J."/>
            <person name="Vivian A."/>
        </authorList>
        <dbReference type="AGRICOLA" id="IND23295115"/>
    </citation>
    <scope>NUCLEOTIDE SEQUENCE [GENOMIC DNA]</scope>
    <source>
        <strain>ITM317</strain>
    </source>
</reference>
<protein>
    <recommendedName>
        <fullName>Effector protein AvrPphDPsv</fullName>
    </recommendedName>
</protein>
<keyword id="KW-0928">Hypersensitive response elicitation</keyword>
<keyword id="KW-0964">Secreted</keyword>
<keyword id="KW-0843">Virulence</keyword>
<gene>
    <name type="primary">avrPphDPsv</name>
</gene>